<name>RODA_MYCLE</name>
<dbReference type="EC" id="2.4.99.28" evidence="1"/>
<dbReference type="EMBL" id="Z70722">
    <property type="protein sequence ID" value="CAA94715.1"/>
    <property type="molecule type" value="Genomic_DNA"/>
</dbReference>
<dbReference type="EMBL" id="AL583917">
    <property type="protein sequence ID" value="CAC29527.1"/>
    <property type="molecule type" value="Genomic_DNA"/>
</dbReference>
<dbReference type="PIR" id="C86911">
    <property type="entry name" value="C86911"/>
</dbReference>
<dbReference type="PIR" id="T10012">
    <property type="entry name" value="T10012"/>
</dbReference>
<dbReference type="RefSeq" id="NP_301145.1">
    <property type="nucleotide sequence ID" value="NC_002677.1"/>
</dbReference>
<dbReference type="RefSeq" id="WP_010907470.1">
    <property type="nucleotide sequence ID" value="NC_002677.1"/>
</dbReference>
<dbReference type="SMR" id="Q50186"/>
<dbReference type="STRING" id="272631.gene:17573830"/>
<dbReference type="KEGG" id="mle:ML0019"/>
<dbReference type="PATRIC" id="fig|272631.5.peg.23"/>
<dbReference type="Leproma" id="ML0019"/>
<dbReference type="eggNOG" id="COG0772">
    <property type="taxonomic scope" value="Bacteria"/>
</dbReference>
<dbReference type="HOGENOM" id="CLU_029243_3_1_11"/>
<dbReference type="OrthoDB" id="9812661at2"/>
<dbReference type="UniPathway" id="UPA00219"/>
<dbReference type="Proteomes" id="UP000000806">
    <property type="component" value="Chromosome"/>
</dbReference>
<dbReference type="GO" id="GO:0032153">
    <property type="term" value="C:cell division site"/>
    <property type="evidence" value="ECO:0007669"/>
    <property type="project" value="TreeGrafter"/>
</dbReference>
<dbReference type="GO" id="GO:0005886">
    <property type="term" value="C:plasma membrane"/>
    <property type="evidence" value="ECO:0007669"/>
    <property type="project" value="UniProtKB-SubCell"/>
</dbReference>
<dbReference type="GO" id="GO:0016757">
    <property type="term" value="F:glycosyltransferase activity"/>
    <property type="evidence" value="ECO:0007669"/>
    <property type="project" value="UniProtKB-KW"/>
</dbReference>
<dbReference type="GO" id="GO:0015648">
    <property type="term" value="F:lipid-linked peptidoglycan transporter activity"/>
    <property type="evidence" value="ECO:0007669"/>
    <property type="project" value="TreeGrafter"/>
</dbReference>
<dbReference type="GO" id="GO:0051301">
    <property type="term" value="P:cell division"/>
    <property type="evidence" value="ECO:0007669"/>
    <property type="project" value="InterPro"/>
</dbReference>
<dbReference type="GO" id="GO:0071555">
    <property type="term" value="P:cell wall organization"/>
    <property type="evidence" value="ECO:0007669"/>
    <property type="project" value="UniProtKB-KW"/>
</dbReference>
<dbReference type="GO" id="GO:0009252">
    <property type="term" value="P:peptidoglycan biosynthetic process"/>
    <property type="evidence" value="ECO:0007669"/>
    <property type="project" value="UniProtKB-UniPathway"/>
</dbReference>
<dbReference type="GO" id="GO:0008360">
    <property type="term" value="P:regulation of cell shape"/>
    <property type="evidence" value="ECO:0007669"/>
    <property type="project" value="UniProtKB-KW"/>
</dbReference>
<dbReference type="InterPro" id="IPR018365">
    <property type="entry name" value="Cell_cycle_FtsW-rel_CS"/>
</dbReference>
<dbReference type="InterPro" id="IPR001182">
    <property type="entry name" value="FtsW/RodA"/>
</dbReference>
<dbReference type="PANTHER" id="PTHR30474">
    <property type="entry name" value="CELL CYCLE PROTEIN"/>
    <property type="match status" value="1"/>
</dbReference>
<dbReference type="PANTHER" id="PTHR30474:SF3">
    <property type="entry name" value="PEPTIDOGLYCAN GLYCOSYLTRANSFERASE RODA"/>
    <property type="match status" value="1"/>
</dbReference>
<dbReference type="Pfam" id="PF01098">
    <property type="entry name" value="FTSW_RODA_SPOVE"/>
    <property type="match status" value="1"/>
</dbReference>
<dbReference type="PROSITE" id="PS00428">
    <property type="entry name" value="FTSW_RODA_SPOVE"/>
    <property type="match status" value="1"/>
</dbReference>
<accession>Q50186</accession>
<proteinExistence type="inferred from homology"/>
<reference key="1">
    <citation type="submission" date="1996-04" db="EMBL/GenBank/DDBJ databases">
        <authorList>
            <person name="Fsihi H."/>
            <person name="Salazar L."/>
            <person name="Takiff H.E."/>
            <person name="Cole S.T."/>
        </authorList>
    </citation>
    <scope>NUCLEOTIDE SEQUENCE [GENOMIC DNA]</scope>
</reference>
<reference key="2">
    <citation type="journal article" date="2001" name="Nature">
        <title>Massive gene decay in the leprosy bacillus.</title>
        <authorList>
            <person name="Cole S.T."/>
            <person name="Eiglmeier K."/>
            <person name="Parkhill J."/>
            <person name="James K.D."/>
            <person name="Thomson N.R."/>
            <person name="Wheeler P.R."/>
            <person name="Honore N."/>
            <person name="Garnier T."/>
            <person name="Churcher C.M."/>
            <person name="Harris D.E."/>
            <person name="Mungall K.L."/>
            <person name="Basham D."/>
            <person name="Brown D."/>
            <person name="Chillingworth T."/>
            <person name="Connor R."/>
            <person name="Davies R.M."/>
            <person name="Devlin K."/>
            <person name="Duthoy S."/>
            <person name="Feltwell T."/>
            <person name="Fraser A."/>
            <person name="Hamlin N."/>
            <person name="Holroyd S."/>
            <person name="Hornsby T."/>
            <person name="Jagels K."/>
            <person name="Lacroix C."/>
            <person name="Maclean J."/>
            <person name="Moule S."/>
            <person name="Murphy L.D."/>
            <person name="Oliver K."/>
            <person name="Quail M.A."/>
            <person name="Rajandream M.A."/>
            <person name="Rutherford K.M."/>
            <person name="Rutter S."/>
            <person name="Seeger K."/>
            <person name="Simon S."/>
            <person name="Simmonds M."/>
            <person name="Skelton J."/>
            <person name="Squares R."/>
            <person name="Squares S."/>
            <person name="Stevens K."/>
            <person name="Taylor K."/>
            <person name="Whitehead S."/>
            <person name="Woodward J.R."/>
            <person name="Barrell B.G."/>
        </authorList>
    </citation>
    <scope>NUCLEOTIDE SEQUENCE [LARGE SCALE GENOMIC DNA]</scope>
    <source>
        <strain>TN</strain>
    </source>
</reference>
<feature type="chain" id="PRO_0000062709" description="Peptidoglycan glycosyltransferase RodA">
    <location>
        <begin position="1"/>
        <end position="465"/>
    </location>
</feature>
<feature type="transmembrane region" description="Helical" evidence="2">
    <location>
        <begin position="21"/>
        <end position="41"/>
    </location>
</feature>
<feature type="transmembrane region" description="Helical" evidence="2">
    <location>
        <begin position="50"/>
        <end position="70"/>
    </location>
</feature>
<feature type="transmembrane region" description="Helical" evidence="2">
    <location>
        <begin position="76"/>
        <end position="96"/>
    </location>
</feature>
<feature type="transmembrane region" description="Helical" evidence="2">
    <location>
        <begin position="115"/>
        <end position="135"/>
    </location>
</feature>
<feature type="transmembrane region" description="Helical" evidence="2">
    <location>
        <begin position="144"/>
        <end position="164"/>
    </location>
</feature>
<feature type="transmembrane region" description="Helical" evidence="2">
    <location>
        <begin position="179"/>
        <end position="199"/>
    </location>
</feature>
<feature type="transmembrane region" description="Helical" evidence="2">
    <location>
        <begin position="222"/>
        <end position="242"/>
    </location>
</feature>
<feature type="transmembrane region" description="Helical" evidence="2">
    <location>
        <begin position="243"/>
        <end position="263"/>
    </location>
</feature>
<feature type="transmembrane region" description="Helical" evidence="2">
    <location>
        <begin position="264"/>
        <end position="284"/>
    </location>
</feature>
<feature type="transmembrane region" description="Helical" evidence="2">
    <location>
        <begin position="308"/>
        <end position="328"/>
    </location>
</feature>
<feature type="transmembrane region" description="Helical" evidence="2">
    <location>
        <begin position="340"/>
        <end position="360"/>
    </location>
</feature>
<feature type="transmembrane region" description="Helical" evidence="2">
    <location>
        <begin position="382"/>
        <end position="402"/>
    </location>
</feature>
<feature type="transmembrane region" description="Helical" evidence="2">
    <location>
        <begin position="414"/>
        <end position="434"/>
    </location>
</feature>
<feature type="sequence conflict" description="In Ref. 1; CAA94715." evidence="3" ref="1">
    <original>GI</original>
    <variation>VY</variation>
    <location>
        <begin position="319"/>
        <end position="320"/>
    </location>
</feature>
<keyword id="KW-0997">Cell inner membrane</keyword>
<keyword id="KW-1003">Cell membrane</keyword>
<keyword id="KW-0133">Cell shape</keyword>
<keyword id="KW-0961">Cell wall biogenesis/degradation</keyword>
<keyword id="KW-0328">Glycosyltransferase</keyword>
<keyword id="KW-0472">Membrane</keyword>
<keyword id="KW-0573">Peptidoglycan synthesis</keyword>
<keyword id="KW-1185">Reference proteome</keyword>
<keyword id="KW-0808">Transferase</keyword>
<keyword id="KW-0812">Transmembrane</keyword>
<keyword id="KW-1133">Transmembrane helix</keyword>
<comment type="function">
    <text evidence="1">Transglycosylase involved in peptidoglycan cell wall formation. Required for the regulation of cell length.</text>
</comment>
<comment type="catalytic activity">
    <reaction evidence="1">
        <text>[GlcNAc-(1-&gt;4)-Mur2Ac(oyl-L-Ala-gamma-D-Glu-L-Lys-D-Ala-D-Ala)](n)-di-trans,octa-cis-undecaprenyl diphosphate + beta-D-GlcNAc-(1-&gt;4)-Mur2Ac(oyl-L-Ala-gamma-D-Glu-L-Lys-D-Ala-D-Ala)-di-trans,octa-cis-undecaprenyl diphosphate = [GlcNAc-(1-&gt;4)-Mur2Ac(oyl-L-Ala-gamma-D-Glu-L-Lys-D-Ala-D-Ala)](n+1)-di-trans,octa-cis-undecaprenyl diphosphate + di-trans,octa-cis-undecaprenyl diphosphate + H(+)</text>
        <dbReference type="Rhea" id="RHEA:23708"/>
        <dbReference type="Rhea" id="RHEA-COMP:9602"/>
        <dbReference type="Rhea" id="RHEA-COMP:9603"/>
        <dbReference type="ChEBI" id="CHEBI:15378"/>
        <dbReference type="ChEBI" id="CHEBI:58405"/>
        <dbReference type="ChEBI" id="CHEBI:60033"/>
        <dbReference type="ChEBI" id="CHEBI:78435"/>
        <dbReference type="EC" id="2.4.99.28"/>
    </reaction>
</comment>
<comment type="pathway">
    <text evidence="1">Cell wall biogenesis; peptidoglycan biosynthesis.</text>
</comment>
<comment type="subcellular location">
    <subcellularLocation>
        <location evidence="1">Cell inner membrane</location>
        <topology evidence="2">Multi-pass membrane protein</topology>
    </subcellularLocation>
</comment>
<comment type="similarity">
    <text evidence="3">Belongs to the SEDS family.</text>
</comment>
<evidence type="ECO:0000250" key="1">
    <source>
        <dbReference type="UniProtKB" id="P9WN99"/>
    </source>
</evidence>
<evidence type="ECO:0000255" key="2"/>
<evidence type="ECO:0000305" key="3"/>
<sequence>MTTQLQPVVTVTPPLPTRRNAELLLLGFAAVITVAALAIVEANQERNFRWYLAGYGLIFWSLFASAHLAIRRFAPYTDPLLLPIVALLNGLGLVMIHRLDLVDNDVTGHHHTSAAQQMLWTLVGVAAFVLVMTVLKDHRQLARYGYISGLTGLVFLAIPAPLPEQNGAKIWIRFPGFSIQPAEFSKILLLIFFAAVLVAKRSLFTSAGKHLIGMTLPRPRDLAPLLAAWVISVSVMVFEKDLGTSLLLYASFLVVVYLATQRLSWVIIGLVLFTAGSTIAYFTFEHIRVRMQVWWDPFTNLDVGGYQIVQSLFSFATGGIFGTGLGNGQPDAIPAASTDFIIAVFGEELGLVGLAALLMLYTIVIVRGLRTAIATRDSFGKLLAAGLASTLAIQLFIVSGGVTTLIPLTGLTTPWMSYGGSSLLANYVLLAILARISHSARHPLRSRPHNTSPIAVASTEVIERV</sequence>
<organism>
    <name type="scientific">Mycobacterium leprae (strain TN)</name>
    <dbReference type="NCBI Taxonomy" id="272631"/>
    <lineage>
        <taxon>Bacteria</taxon>
        <taxon>Bacillati</taxon>
        <taxon>Actinomycetota</taxon>
        <taxon>Actinomycetes</taxon>
        <taxon>Mycobacteriales</taxon>
        <taxon>Mycobacteriaceae</taxon>
        <taxon>Mycobacterium</taxon>
    </lineage>
</organism>
<gene>
    <name type="primary">rodA</name>
    <name type="ordered locus">ML0019</name>
</gene>
<protein>
    <recommendedName>
        <fullName evidence="1">Peptidoglycan glycosyltransferase RodA</fullName>
        <ecNumber evidence="1">2.4.99.28</ecNumber>
    </recommendedName>
    <alternativeName>
        <fullName evidence="1">Non-canonical transglycosylase RodA</fullName>
    </alternativeName>
</protein>